<name>RS6_SHEPW</name>
<keyword id="KW-0687">Ribonucleoprotein</keyword>
<keyword id="KW-0689">Ribosomal protein</keyword>
<keyword id="KW-0694">RNA-binding</keyword>
<keyword id="KW-0699">rRNA-binding</keyword>
<reference key="1">
    <citation type="journal article" date="2008" name="PLoS ONE">
        <title>Environmental adaptation: genomic analysis of the piezotolerant and psychrotolerant deep-sea iron reducing bacterium Shewanella piezotolerans WP3.</title>
        <authorList>
            <person name="Wang F."/>
            <person name="Wang J."/>
            <person name="Jian H."/>
            <person name="Zhang B."/>
            <person name="Li S."/>
            <person name="Wang F."/>
            <person name="Zeng X."/>
            <person name="Gao L."/>
            <person name="Bartlett D.H."/>
            <person name="Yu J."/>
            <person name="Hu S."/>
            <person name="Xiao X."/>
        </authorList>
    </citation>
    <scope>NUCLEOTIDE SEQUENCE [LARGE SCALE GENOMIC DNA]</scope>
    <source>
        <strain>WP3 / JCM 13877</strain>
    </source>
</reference>
<gene>
    <name evidence="1" type="primary">rpsF</name>
    <name type="ordered locus">swp_0711</name>
</gene>
<accession>B8CIQ1</accession>
<feature type="chain" id="PRO_1000120804" description="Small ribosomal subunit protein bS6">
    <location>
        <begin position="1"/>
        <end position="137"/>
    </location>
</feature>
<feature type="region of interest" description="Disordered" evidence="2">
    <location>
        <begin position="96"/>
        <end position="137"/>
    </location>
</feature>
<feature type="compositionally biased region" description="Basic and acidic residues" evidence="2">
    <location>
        <begin position="104"/>
        <end position="137"/>
    </location>
</feature>
<organism>
    <name type="scientific">Shewanella piezotolerans (strain WP3 / JCM 13877)</name>
    <dbReference type="NCBI Taxonomy" id="225849"/>
    <lineage>
        <taxon>Bacteria</taxon>
        <taxon>Pseudomonadati</taxon>
        <taxon>Pseudomonadota</taxon>
        <taxon>Gammaproteobacteria</taxon>
        <taxon>Alteromonadales</taxon>
        <taxon>Shewanellaceae</taxon>
        <taxon>Shewanella</taxon>
    </lineage>
</organism>
<sequence length="137" mass="15702">MRHYEIVFLVHPDQSEQVPGMIERYTGILTQAGGQIHRLEDWGRRQLAYPIIELHKAHYVLMNVETTAESVEELETAFRFNDAVLRSMVMRTKAAITEASPMAKAKDERDTRRSSEERAPRAEATEEVKESAENTAE</sequence>
<protein>
    <recommendedName>
        <fullName evidence="1">Small ribosomal subunit protein bS6</fullName>
    </recommendedName>
    <alternativeName>
        <fullName evidence="3">30S ribosomal protein S6</fullName>
    </alternativeName>
</protein>
<comment type="function">
    <text evidence="1">Binds together with bS18 to 16S ribosomal RNA.</text>
</comment>
<comment type="similarity">
    <text evidence="1">Belongs to the bacterial ribosomal protein bS6 family.</text>
</comment>
<dbReference type="EMBL" id="CP000472">
    <property type="protein sequence ID" value="ACJ27527.1"/>
    <property type="molecule type" value="Genomic_DNA"/>
</dbReference>
<dbReference type="RefSeq" id="WP_020910908.1">
    <property type="nucleotide sequence ID" value="NC_011566.1"/>
</dbReference>
<dbReference type="SMR" id="B8CIQ1"/>
<dbReference type="STRING" id="225849.swp_0711"/>
<dbReference type="KEGG" id="swp:swp_0711"/>
<dbReference type="eggNOG" id="COG0360">
    <property type="taxonomic scope" value="Bacteria"/>
</dbReference>
<dbReference type="HOGENOM" id="CLU_113441_6_1_6"/>
<dbReference type="OrthoDB" id="9812702at2"/>
<dbReference type="Proteomes" id="UP000000753">
    <property type="component" value="Chromosome"/>
</dbReference>
<dbReference type="GO" id="GO:0022627">
    <property type="term" value="C:cytosolic small ribosomal subunit"/>
    <property type="evidence" value="ECO:0007669"/>
    <property type="project" value="TreeGrafter"/>
</dbReference>
<dbReference type="GO" id="GO:0070181">
    <property type="term" value="F:small ribosomal subunit rRNA binding"/>
    <property type="evidence" value="ECO:0007669"/>
    <property type="project" value="TreeGrafter"/>
</dbReference>
<dbReference type="GO" id="GO:0003735">
    <property type="term" value="F:structural constituent of ribosome"/>
    <property type="evidence" value="ECO:0007669"/>
    <property type="project" value="InterPro"/>
</dbReference>
<dbReference type="GO" id="GO:0006412">
    <property type="term" value="P:translation"/>
    <property type="evidence" value="ECO:0007669"/>
    <property type="project" value="UniProtKB-UniRule"/>
</dbReference>
<dbReference type="CDD" id="cd00473">
    <property type="entry name" value="bS6"/>
    <property type="match status" value="1"/>
</dbReference>
<dbReference type="FunFam" id="3.30.70.60:FF:000003">
    <property type="entry name" value="30S ribosomal protein S6"/>
    <property type="match status" value="1"/>
</dbReference>
<dbReference type="Gene3D" id="3.30.70.60">
    <property type="match status" value="1"/>
</dbReference>
<dbReference type="HAMAP" id="MF_00360">
    <property type="entry name" value="Ribosomal_bS6"/>
    <property type="match status" value="1"/>
</dbReference>
<dbReference type="InterPro" id="IPR000529">
    <property type="entry name" value="Ribosomal_bS6"/>
</dbReference>
<dbReference type="InterPro" id="IPR035980">
    <property type="entry name" value="Ribosomal_bS6_sf"/>
</dbReference>
<dbReference type="InterPro" id="IPR020814">
    <property type="entry name" value="Ribosomal_S6_plastid/chlpt"/>
</dbReference>
<dbReference type="InterPro" id="IPR014717">
    <property type="entry name" value="Transl_elong_EF1B/ribsomal_bS6"/>
</dbReference>
<dbReference type="NCBIfam" id="TIGR00166">
    <property type="entry name" value="S6"/>
    <property type="match status" value="1"/>
</dbReference>
<dbReference type="PANTHER" id="PTHR21011">
    <property type="entry name" value="MITOCHONDRIAL 28S RIBOSOMAL PROTEIN S6"/>
    <property type="match status" value="1"/>
</dbReference>
<dbReference type="PANTHER" id="PTHR21011:SF1">
    <property type="entry name" value="SMALL RIBOSOMAL SUBUNIT PROTEIN BS6M"/>
    <property type="match status" value="1"/>
</dbReference>
<dbReference type="Pfam" id="PF01250">
    <property type="entry name" value="Ribosomal_S6"/>
    <property type="match status" value="1"/>
</dbReference>
<dbReference type="SUPFAM" id="SSF54995">
    <property type="entry name" value="Ribosomal protein S6"/>
    <property type="match status" value="1"/>
</dbReference>
<evidence type="ECO:0000255" key="1">
    <source>
        <dbReference type="HAMAP-Rule" id="MF_00360"/>
    </source>
</evidence>
<evidence type="ECO:0000256" key="2">
    <source>
        <dbReference type="SAM" id="MobiDB-lite"/>
    </source>
</evidence>
<evidence type="ECO:0000305" key="3"/>
<proteinExistence type="inferred from homology"/>